<sequence length="150" mass="17388">MKPKNWLILKRKVRFGDCDSAGVIHFHNLLRWAHESWEESIDIYGIPHQDIFPDSNSHKNQIICPIVNCEANFLSPIKIGDLLSIKIFPKKINNHLFQVNTFFLKDEINVAEGKIIHCSLDVDSKLKVKLPDQLERWIEASNINTNLKEC</sequence>
<proteinExistence type="inferred from homology"/>
<organism>
    <name type="scientific">Prochlorococcus marinus subsp. pastoris (strain CCMP1986 / NIES-2087 / MED4)</name>
    <dbReference type="NCBI Taxonomy" id="59919"/>
    <lineage>
        <taxon>Bacteria</taxon>
        <taxon>Bacillati</taxon>
        <taxon>Cyanobacteriota</taxon>
        <taxon>Cyanophyceae</taxon>
        <taxon>Synechococcales</taxon>
        <taxon>Prochlorococcaceae</taxon>
        <taxon>Prochlorococcus</taxon>
    </lineage>
</organism>
<keyword id="KW-0378">Hydrolase</keyword>
<dbReference type="EC" id="3.1.2.28" evidence="1"/>
<dbReference type="EMBL" id="BX548174">
    <property type="protein sequence ID" value="CAE18632.1"/>
    <property type="molecule type" value="Genomic_DNA"/>
</dbReference>
<dbReference type="RefSeq" id="WP_011131812.1">
    <property type="nucleotide sequence ID" value="NC_005072.1"/>
</dbReference>
<dbReference type="SMR" id="Q7V3A9"/>
<dbReference type="STRING" id="59919.PMM0173"/>
<dbReference type="KEGG" id="pmm:PMM0173"/>
<dbReference type="eggNOG" id="COG0824">
    <property type="taxonomic scope" value="Bacteria"/>
</dbReference>
<dbReference type="HOGENOM" id="CLU_101141_5_3_3"/>
<dbReference type="OrthoDB" id="9800856at2"/>
<dbReference type="UniPathway" id="UPA00995"/>
<dbReference type="UniPathway" id="UPA01057">
    <property type="reaction ID" value="UER01033"/>
</dbReference>
<dbReference type="Proteomes" id="UP000001026">
    <property type="component" value="Chromosome"/>
</dbReference>
<dbReference type="GO" id="GO:0061522">
    <property type="term" value="F:1,4-dihydroxy-2-naphthoyl-CoA thioesterase activity"/>
    <property type="evidence" value="ECO:0007669"/>
    <property type="project" value="UniProtKB-EC"/>
</dbReference>
<dbReference type="GO" id="GO:0042372">
    <property type="term" value="P:phylloquinone biosynthetic process"/>
    <property type="evidence" value="ECO:0007669"/>
    <property type="project" value="UniProtKB-UniRule"/>
</dbReference>
<dbReference type="CDD" id="cd00586">
    <property type="entry name" value="4HBT"/>
    <property type="match status" value="1"/>
</dbReference>
<dbReference type="Gene3D" id="3.10.129.10">
    <property type="entry name" value="Hotdog Thioesterase"/>
    <property type="match status" value="1"/>
</dbReference>
<dbReference type="HAMAP" id="MF_02101">
    <property type="entry name" value="DHNA_CoA_hydrolase"/>
    <property type="match status" value="1"/>
</dbReference>
<dbReference type="InterPro" id="IPR022829">
    <property type="entry name" value="DHNA_CoA_hydrolase"/>
</dbReference>
<dbReference type="InterPro" id="IPR029069">
    <property type="entry name" value="HotDog_dom_sf"/>
</dbReference>
<dbReference type="Pfam" id="PF13279">
    <property type="entry name" value="4HBT_2"/>
    <property type="match status" value="1"/>
</dbReference>
<dbReference type="SUPFAM" id="SSF54637">
    <property type="entry name" value="Thioesterase/thiol ester dehydrase-isomerase"/>
    <property type="match status" value="1"/>
</dbReference>
<comment type="function">
    <text evidence="1">Catalyzes the hydrolysis of 1,4-dihydroxy-2-naphthoyl-CoA (DHNA-CoA) to 1,4-dihydroxy-2-naphthoate (DHNA), a reaction involved in phylloquinone (vitamin K1) biosynthesis.</text>
</comment>
<comment type="catalytic activity">
    <reaction evidence="1">
        <text>1,4-dihydroxy-2-naphthoyl-CoA + H2O = 1,4-dihydroxy-2-naphthoate + CoA + H(+)</text>
        <dbReference type="Rhea" id="RHEA:26309"/>
        <dbReference type="ChEBI" id="CHEBI:11173"/>
        <dbReference type="ChEBI" id="CHEBI:15377"/>
        <dbReference type="ChEBI" id="CHEBI:15378"/>
        <dbReference type="ChEBI" id="CHEBI:57287"/>
        <dbReference type="ChEBI" id="CHEBI:58897"/>
        <dbReference type="EC" id="3.1.2.28"/>
    </reaction>
</comment>
<comment type="pathway">
    <text evidence="1">Cofactor biosynthesis; phylloquinone biosynthesis.</text>
</comment>
<comment type="pathway">
    <text evidence="1">Quinol/quinone metabolism; 1,4-dihydroxy-2-naphthoate biosynthesis; 1,4-dihydroxy-2-naphthoate from chorismate: step 7/7.</text>
</comment>
<comment type="similarity">
    <text evidence="1">Belongs to the 4-hydroxybenzoyl-CoA thioesterase family. DHNA-CoA hydrolase subfamily.</text>
</comment>
<accession>Q7V3A9</accession>
<name>DNCH_PROMP</name>
<protein>
    <recommendedName>
        <fullName evidence="1">1,4-dihydroxy-2-naphthoyl-CoA hydrolase</fullName>
        <shortName evidence="1">DHNA-CoA hydrolase</shortName>
        <ecNumber evidence="1">3.1.2.28</ecNumber>
    </recommendedName>
    <alternativeName>
        <fullName evidence="1">DHNA-CoA thioesterase</fullName>
    </alternativeName>
</protein>
<evidence type="ECO:0000255" key="1">
    <source>
        <dbReference type="HAMAP-Rule" id="MF_02101"/>
    </source>
</evidence>
<reference key="1">
    <citation type="journal article" date="2003" name="Nature">
        <title>Genome divergence in two Prochlorococcus ecotypes reflects oceanic niche differentiation.</title>
        <authorList>
            <person name="Rocap G."/>
            <person name="Larimer F.W."/>
            <person name="Lamerdin J.E."/>
            <person name="Malfatti S."/>
            <person name="Chain P."/>
            <person name="Ahlgren N.A."/>
            <person name="Arellano A."/>
            <person name="Coleman M."/>
            <person name="Hauser L."/>
            <person name="Hess W.R."/>
            <person name="Johnson Z.I."/>
            <person name="Land M.L."/>
            <person name="Lindell D."/>
            <person name="Post A.F."/>
            <person name="Regala W."/>
            <person name="Shah M."/>
            <person name="Shaw S.L."/>
            <person name="Steglich C."/>
            <person name="Sullivan M.B."/>
            <person name="Ting C.S."/>
            <person name="Tolonen A."/>
            <person name="Webb E.A."/>
            <person name="Zinser E.R."/>
            <person name="Chisholm S.W."/>
        </authorList>
    </citation>
    <scope>NUCLEOTIDE SEQUENCE [LARGE SCALE GENOMIC DNA]</scope>
    <source>
        <strain>CCMP1986 / NIES-2087 / MED4</strain>
    </source>
</reference>
<feature type="chain" id="PRO_0000377026" description="1,4-dihydroxy-2-naphthoyl-CoA hydrolase">
    <location>
        <begin position="1"/>
        <end position="150"/>
    </location>
</feature>
<feature type="active site" evidence="1">
    <location>
        <position position="19"/>
    </location>
</feature>
<gene>
    <name type="ordered locus">PMM0173</name>
</gene>